<geneLocation type="chloroplast"/>
<keyword id="KW-0004">4Fe-4S</keyword>
<keyword id="KW-0150">Chloroplast</keyword>
<keyword id="KW-0408">Iron</keyword>
<keyword id="KW-0411">Iron-sulfur</keyword>
<keyword id="KW-0472">Membrane</keyword>
<keyword id="KW-0479">Metal-binding</keyword>
<keyword id="KW-0520">NAD</keyword>
<keyword id="KW-0521">NADP</keyword>
<keyword id="KW-0934">Plastid</keyword>
<keyword id="KW-0618">Plastoquinone</keyword>
<keyword id="KW-0874">Quinone</keyword>
<keyword id="KW-0793">Thylakoid</keyword>
<keyword id="KW-1278">Translocase</keyword>
<keyword id="KW-0813">Transport</keyword>
<accession>A1EA12</accession>
<comment type="function">
    <text evidence="1">NDH shuttles electrons from NAD(P)H:plastoquinone, via FMN and iron-sulfur (Fe-S) centers, to quinones in the photosynthetic chain and possibly in a chloroplast respiratory chain. The immediate electron acceptor for the enzyme in this species is believed to be plastoquinone. Couples the redox reaction to proton translocation, and thus conserves the redox energy in a proton gradient.</text>
</comment>
<comment type="catalytic activity">
    <reaction evidence="1">
        <text>a plastoquinone + NADH + (n+1) H(+)(in) = a plastoquinol + NAD(+) + n H(+)(out)</text>
        <dbReference type="Rhea" id="RHEA:42608"/>
        <dbReference type="Rhea" id="RHEA-COMP:9561"/>
        <dbReference type="Rhea" id="RHEA-COMP:9562"/>
        <dbReference type="ChEBI" id="CHEBI:15378"/>
        <dbReference type="ChEBI" id="CHEBI:17757"/>
        <dbReference type="ChEBI" id="CHEBI:57540"/>
        <dbReference type="ChEBI" id="CHEBI:57945"/>
        <dbReference type="ChEBI" id="CHEBI:62192"/>
    </reaction>
</comment>
<comment type="catalytic activity">
    <reaction evidence="1">
        <text>a plastoquinone + NADPH + (n+1) H(+)(in) = a plastoquinol + NADP(+) + n H(+)(out)</text>
        <dbReference type="Rhea" id="RHEA:42612"/>
        <dbReference type="Rhea" id="RHEA-COMP:9561"/>
        <dbReference type="Rhea" id="RHEA-COMP:9562"/>
        <dbReference type="ChEBI" id="CHEBI:15378"/>
        <dbReference type="ChEBI" id="CHEBI:17757"/>
        <dbReference type="ChEBI" id="CHEBI:57783"/>
        <dbReference type="ChEBI" id="CHEBI:58349"/>
        <dbReference type="ChEBI" id="CHEBI:62192"/>
    </reaction>
</comment>
<comment type="cofactor">
    <cofactor evidence="1">
        <name>[4Fe-4S] cluster</name>
        <dbReference type="ChEBI" id="CHEBI:49883"/>
    </cofactor>
    <text evidence="1">Binds 1 [4Fe-4S] cluster.</text>
</comment>
<comment type="subunit">
    <text evidence="1">NDH is composed of at least 16 different subunits, 5 of which are encoded in the nucleus.</text>
</comment>
<comment type="subcellular location">
    <subcellularLocation>
        <location evidence="1">Plastid</location>
        <location evidence="1">Chloroplast thylakoid membrane</location>
        <topology evidence="1">Peripheral membrane protein</topology>
        <orientation evidence="1">Stromal side</orientation>
    </subcellularLocation>
</comment>
<comment type="similarity">
    <text evidence="1">Belongs to the complex I 20 kDa subunit family.</text>
</comment>
<comment type="sequence caution" evidence="2">
    <conflict type="erroneous initiation">
        <sequence resource="EMBL-CDS" id="ABK79584"/>
    </conflict>
</comment>
<organism>
    <name type="scientific">Agrostis stolonifera</name>
    <name type="common">Creeping bentgrass</name>
    <dbReference type="NCBI Taxonomy" id="63632"/>
    <lineage>
        <taxon>Eukaryota</taxon>
        <taxon>Viridiplantae</taxon>
        <taxon>Streptophyta</taxon>
        <taxon>Embryophyta</taxon>
        <taxon>Tracheophyta</taxon>
        <taxon>Spermatophyta</taxon>
        <taxon>Magnoliopsida</taxon>
        <taxon>Liliopsida</taxon>
        <taxon>Poales</taxon>
        <taxon>Poaceae</taxon>
        <taxon>BOP clade</taxon>
        <taxon>Pooideae</taxon>
        <taxon>Poodae</taxon>
        <taxon>Poeae</taxon>
        <taxon>Poeae Chloroplast Group 1 (Aveneae type)</taxon>
        <taxon>Agrostidodinae</taxon>
        <taxon>Agrostidinae</taxon>
        <taxon>Agrostis</taxon>
    </lineage>
</organism>
<name>NDHK_AGRST</name>
<feature type="chain" id="PRO_0000358517" description="NAD(P)H-quinone oxidoreductase subunit K, chloroplastic">
    <location>
        <begin position="1"/>
        <end position="225"/>
    </location>
</feature>
<feature type="binding site" evidence="1">
    <location>
        <position position="43"/>
    </location>
    <ligand>
        <name>[4Fe-4S] cluster</name>
        <dbReference type="ChEBI" id="CHEBI:49883"/>
    </ligand>
</feature>
<feature type="binding site" evidence="1">
    <location>
        <position position="44"/>
    </location>
    <ligand>
        <name>[4Fe-4S] cluster</name>
        <dbReference type="ChEBI" id="CHEBI:49883"/>
    </ligand>
</feature>
<feature type="binding site" evidence="1">
    <location>
        <position position="108"/>
    </location>
    <ligand>
        <name>[4Fe-4S] cluster</name>
        <dbReference type="ChEBI" id="CHEBI:49883"/>
    </ligand>
</feature>
<feature type="binding site" evidence="1">
    <location>
        <position position="139"/>
    </location>
    <ligand>
        <name>[4Fe-4S] cluster</name>
        <dbReference type="ChEBI" id="CHEBI:49883"/>
    </ligand>
</feature>
<evidence type="ECO:0000255" key="1">
    <source>
        <dbReference type="HAMAP-Rule" id="MF_01356"/>
    </source>
</evidence>
<evidence type="ECO:0000305" key="2"/>
<sequence length="225" mass="25275">MNLIEFPLLDQTSSNSVISTTPNDLSNWSRLSSLWPLLYGTSCCFIEFASLIGSRFDFDRYGLVPRSSPRQADLILTAGTVTMKMAPSLVRLYEQMPEPKYVIAMGACTITGGMFSTDSYSTVRGVDKLIPVDVYLPGCPPKPEAVIDALTKLRKKISREIVEDRTRSQNKNRCFTTSHKLYVRRSTHTGTYEQELLYQSPSTLDISSETFFKSKSPVPSYKLVN</sequence>
<proteinExistence type="inferred from homology"/>
<gene>
    <name evidence="1" type="primary">ndhK</name>
</gene>
<dbReference type="EC" id="7.1.1.-" evidence="1"/>
<dbReference type="EMBL" id="EF115543">
    <property type="protein sequence ID" value="ABK79584.1"/>
    <property type="status" value="ALT_INIT"/>
    <property type="molecule type" value="Genomic_DNA"/>
</dbReference>
<dbReference type="RefSeq" id="YP_874740.1">
    <property type="nucleotide sequence ID" value="NC_008591.1"/>
</dbReference>
<dbReference type="SMR" id="A1EA12"/>
<dbReference type="GeneID" id="4524917"/>
<dbReference type="GO" id="GO:0009535">
    <property type="term" value="C:chloroplast thylakoid membrane"/>
    <property type="evidence" value="ECO:0007669"/>
    <property type="project" value="UniProtKB-SubCell"/>
</dbReference>
<dbReference type="GO" id="GO:0045271">
    <property type="term" value="C:respiratory chain complex I"/>
    <property type="evidence" value="ECO:0007669"/>
    <property type="project" value="TreeGrafter"/>
</dbReference>
<dbReference type="GO" id="GO:0051539">
    <property type="term" value="F:4 iron, 4 sulfur cluster binding"/>
    <property type="evidence" value="ECO:0007669"/>
    <property type="project" value="UniProtKB-KW"/>
</dbReference>
<dbReference type="GO" id="GO:0005506">
    <property type="term" value="F:iron ion binding"/>
    <property type="evidence" value="ECO:0007669"/>
    <property type="project" value="UniProtKB-UniRule"/>
</dbReference>
<dbReference type="GO" id="GO:0008137">
    <property type="term" value="F:NADH dehydrogenase (ubiquinone) activity"/>
    <property type="evidence" value="ECO:0007669"/>
    <property type="project" value="InterPro"/>
</dbReference>
<dbReference type="GO" id="GO:0048038">
    <property type="term" value="F:quinone binding"/>
    <property type="evidence" value="ECO:0007669"/>
    <property type="project" value="UniProtKB-KW"/>
</dbReference>
<dbReference type="GO" id="GO:0009060">
    <property type="term" value="P:aerobic respiration"/>
    <property type="evidence" value="ECO:0007669"/>
    <property type="project" value="TreeGrafter"/>
</dbReference>
<dbReference type="GO" id="GO:0015990">
    <property type="term" value="P:electron transport coupled proton transport"/>
    <property type="evidence" value="ECO:0007669"/>
    <property type="project" value="TreeGrafter"/>
</dbReference>
<dbReference type="GO" id="GO:0019684">
    <property type="term" value="P:photosynthesis, light reaction"/>
    <property type="evidence" value="ECO:0007669"/>
    <property type="project" value="UniProtKB-UniRule"/>
</dbReference>
<dbReference type="FunFam" id="3.40.50.12280:FF:000003">
    <property type="entry name" value="NAD(P)H-quinone oxidoreductase subunit K, chloroplastic"/>
    <property type="match status" value="1"/>
</dbReference>
<dbReference type="Gene3D" id="3.40.50.12280">
    <property type="match status" value="1"/>
</dbReference>
<dbReference type="HAMAP" id="MF_01356">
    <property type="entry name" value="NDH1_NuoB"/>
    <property type="match status" value="1"/>
</dbReference>
<dbReference type="InterPro" id="IPR006137">
    <property type="entry name" value="NADH_UbQ_OxRdtase-like_20kDa"/>
</dbReference>
<dbReference type="InterPro" id="IPR006138">
    <property type="entry name" value="NADH_UQ_OxRdtase_20Kd_su"/>
</dbReference>
<dbReference type="NCBIfam" id="TIGR01957">
    <property type="entry name" value="nuoB_fam"/>
    <property type="match status" value="1"/>
</dbReference>
<dbReference type="NCBIfam" id="NF005012">
    <property type="entry name" value="PRK06411.1"/>
    <property type="match status" value="1"/>
</dbReference>
<dbReference type="PANTHER" id="PTHR11995">
    <property type="entry name" value="NADH DEHYDROGENASE"/>
    <property type="match status" value="1"/>
</dbReference>
<dbReference type="PANTHER" id="PTHR11995:SF14">
    <property type="entry name" value="NADH DEHYDROGENASE [UBIQUINONE] IRON-SULFUR PROTEIN 7, MITOCHONDRIAL"/>
    <property type="match status" value="1"/>
</dbReference>
<dbReference type="Pfam" id="PF01058">
    <property type="entry name" value="Oxidored_q6"/>
    <property type="match status" value="1"/>
</dbReference>
<dbReference type="SUPFAM" id="SSF56770">
    <property type="entry name" value="HydA/Nqo6-like"/>
    <property type="match status" value="1"/>
</dbReference>
<dbReference type="PROSITE" id="PS01150">
    <property type="entry name" value="COMPLEX1_20K"/>
    <property type="match status" value="1"/>
</dbReference>
<reference key="1">
    <citation type="journal article" date="2007" name="Theor. Appl. Genet.">
        <title>Complete chloroplast genome sequences of Hordeum vulgare, Sorghum bicolor and Agrostis stolonifera, and comparative analyses with other grass genomes.</title>
        <authorList>
            <person name="Saski C."/>
            <person name="Lee S.-B."/>
            <person name="Fjellheim S."/>
            <person name="Guda C."/>
            <person name="Jansen R.K."/>
            <person name="Luo H."/>
            <person name="Tomkins J."/>
            <person name="Rognli O.A."/>
            <person name="Daniell H."/>
            <person name="Clarke J.L."/>
        </authorList>
    </citation>
    <scope>NUCLEOTIDE SEQUENCE [LARGE SCALE GENOMIC DNA]</scope>
    <source>
        <strain>cv. Penn A-4</strain>
    </source>
</reference>
<protein>
    <recommendedName>
        <fullName evidence="1">NAD(P)H-quinone oxidoreductase subunit K, chloroplastic</fullName>
        <ecNumber evidence="1">7.1.1.-</ecNumber>
    </recommendedName>
    <alternativeName>
        <fullName evidence="1">NAD(P)H dehydrogenase subunit K</fullName>
    </alternativeName>
    <alternativeName>
        <fullName evidence="1">NADH-plastoquinone oxidoreductase subunit K</fullName>
    </alternativeName>
</protein>